<proteinExistence type="evidence at transcript level"/>
<sequence>MKIAAFVVACLVATSAVSCAPTTRALTDDFDDFVGLLPLNDLLDLAMRYLLTDKEVQQTLLYLQGEEFSAVWDQFFELSAVRDLLQYLEEAGVPAYESLNVVADFLGLSPLKPTSVRSLSLAARTGGLNGLLEEALAMMPAAELEAMFEEKMKSSTEFKALFEKMQNFDHKQLRALYESSTEVQNMIHKLESLGVDVDHIVEVLKDFFGWN</sequence>
<protein>
    <recommendedName>
        <fullName>Protein G12</fullName>
    </recommendedName>
    <alternativeName>
        <fullName>ANG12</fullName>
    </alternativeName>
</protein>
<comment type="developmental stage">
    <text>Induced in the midgut of female after blood meal.</text>
</comment>
<name>G12_ANOGA</name>
<evidence type="ECO:0000255" key="1"/>
<evidence type="ECO:0000305" key="2"/>
<accession>Q17040</accession>
<accession>Q7Q5V5</accession>
<organism>
    <name type="scientific">Anopheles gambiae</name>
    <name type="common">African malaria mosquito</name>
    <dbReference type="NCBI Taxonomy" id="7165"/>
    <lineage>
        <taxon>Eukaryota</taxon>
        <taxon>Metazoa</taxon>
        <taxon>Ecdysozoa</taxon>
        <taxon>Arthropoda</taxon>
        <taxon>Hexapoda</taxon>
        <taxon>Insecta</taxon>
        <taxon>Pterygota</taxon>
        <taxon>Neoptera</taxon>
        <taxon>Endopterygota</taxon>
        <taxon>Diptera</taxon>
        <taxon>Nematocera</taxon>
        <taxon>Culicoidea</taxon>
        <taxon>Culicidae</taxon>
        <taxon>Anophelinae</taxon>
        <taxon>Anopheles</taxon>
    </lineage>
</organism>
<keyword id="KW-1185">Reference proteome</keyword>
<keyword id="KW-0732">Signal</keyword>
<dbReference type="EMBL" id="Z22925">
    <property type="protein sequence ID" value="CAA80505.1"/>
    <property type="molecule type" value="Genomic_DNA"/>
</dbReference>
<dbReference type="EMBL" id="AAAB01008960">
    <property type="protein sequence ID" value="EAA11870.2"/>
    <property type="molecule type" value="Genomic_DNA"/>
</dbReference>
<dbReference type="PIR" id="S34274">
    <property type="entry name" value="S34274"/>
</dbReference>
<dbReference type="SMR" id="Q17040"/>
<dbReference type="PaxDb" id="7165-AGAP006187-PA"/>
<dbReference type="EnsemblMetazoa" id="AGAP006187-RA">
    <property type="protein sequence ID" value="AGAP006187-PA"/>
    <property type="gene ID" value="AGAP006187"/>
</dbReference>
<dbReference type="GeneID" id="1276853"/>
<dbReference type="KEGG" id="aga:1276853"/>
<dbReference type="VEuPathDB" id="VectorBase:AGAMI1_004978"/>
<dbReference type="VEuPathDB" id="VectorBase:AGAP006187"/>
<dbReference type="eggNOG" id="ENOG502S16P">
    <property type="taxonomic scope" value="Eukaryota"/>
</dbReference>
<dbReference type="HOGENOM" id="CLU_099971_0_0_1"/>
<dbReference type="InParanoid" id="Q17040"/>
<dbReference type="OMA" id="FDPKFRQ"/>
<dbReference type="PhylomeDB" id="Q17040"/>
<dbReference type="Proteomes" id="UP000007062">
    <property type="component" value="Chromosome 2L"/>
</dbReference>
<dbReference type="InterPro" id="IPR010629">
    <property type="entry name" value="Ins_allergen"/>
</dbReference>
<dbReference type="PANTHER" id="PTHR21163:SF0">
    <property type="entry name" value="GH08205P-RELATED"/>
    <property type="match status" value="1"/>
</dbReference>
<dbReference type="PANTHER" id="PTHR21163">
    <property type="entry name" value="PROTEIN G12"/>
    <property type="match status" value="1"/>
</dbReference>
<dbReference type="Pfam" id="PF06757">
    <property type="entry name" value="Ins_allergen_rp"/>
    <property type="match status" value="1"/>
</dbReference>
<gene>
    <name type="ORF">AGAP006187</name>
</gene>
<feature type="signal peptide" evidence="1">
    <location>
        <begin position="1"/>
        <end position="19"/>
    </location>
</feature>
<feature type="chain" id="PRO_0000021305" description="Protein G12">
    <location>
        <begin position="20"/>
        <end position="211"/>
    </location>
</feature>
<feature type="sequence conflict" description="In Ref. 1; CAA80505." evidence="2" ref="1">
    <original>A</original>
    <variation>P</variation>
    <location>
        <position position="25"/>
    </location>
</feature>
<reference key="1">
    <citation type="submission" date="1993-06" db="EMBL/GenBank/DDBJ databases">
        <authorList>
            <person name="Mueller H.M."/>
            <person name="Crisanti A."/>
        </authorList>
    </citation>
    <scope>NUCLEOTIDE SEQUENCE [GENOMIC DNA]</scope>
    <source>
        <strain>Suakoko</strain>
    </source>
</reference>
<reference key="2">
    <citation type="journal article" date="2002" name="Science">
        <title>The genome sequence of the malaria mosquito Anopheles gambiae.</title>
        <authorList>
            <person name="Holt R.A."/>
            <person name="Subramanian G.M."/>
            <person name="Halpern A."/>
            <person name="Sutton G.G."/>
            <person name="Charlab R."/>
            <person name="Nusskern D.R."/>
            <person name="Wincker P."/>
            <person name="Clark A.G."/>
            <person name="Ribeiro J.M.C."/>
            <person name="Wides R."/>
            <person name="Salzberg S.L."/>
            <person name="Loftus B.J."/>
            <person name="Yandell M.D."/>
            <person name="Majoros W.H."/>
            <person name="Rusch D.B."/>
            <person name="Lai Z."/>
            <person name="Kraft C.L."/>
            <person name="Abril J.F."/>
            <person name="Anthouard V."/>
            <person name="Arensburger P."/>
            <person name="Atkinson P.W."/>
            <person name="Baden H."/>
            <person name="de Berardinis V."/>
            <person name="Baldwin D."/>
            <person name="Benes V."/>
            <person name="Biedler J."/>
            <person name="Blass C."/>
            <person name="Bolanos R."/>
            <person name="Boscus D."/>
            <person name="Barnstead M."/>
            <person name="Cai S."/>
            <person name="Center A."/>
            <person name="Chaturverdi K."/>
            <person name="Christophides G.K."/>
            <person name="Chrystal M.A.M."/>
            <person name="Clamp M."/>
            <person name="Cravchik A."/>
            <person name="Curwen V."/>
            <person name="Dana A."/>
            <person name="Delcher A."/>
            <person name="Dew I."/>
            <person name="Evans C.A."/>
            <person name="Flanigan M."/>
            <person name="Grundschober-Freimoser A."/>
            <person name="Friedli L."/>
            <person name="Gu Z."/>
            <person name="Guan P."/>
            <person name="Guigo R."/>
            <person name="Hillenmeyer M.E."/>
            <person name="Hladun S.L."/>
            <person name="Hogan J.R."/>
            <person name="Hong Y.S."/>
            <person name="Hoover J."/>
            <person name="Jaillon O."/>
            <person name="Ke Z."/>
            <person name="Kodira C.D."/>
            <person name="Kokoza E."/>
            <person name="Koutsos A."/>
            <person name="Letunic I."/>
            <person name="Levitsky A.A."/>
            <person name="Liang Y."/>
            <person name="Lin J.-J."/>
            <person name="Lobo N.F."/>
            <person name="Lopez J.R."/>
            <person name="Malek J.A."/>
            <person name="McIntosh T.C."/>
            <person name="Meister S."/>
            <person name="Miller J.R."/>
            <person name="Mobarry C."/>
            <person name="Mongin E."/>
            <person name="Murphy S.D."/>
            <person name="O'Brochta D.A."/>
            <person name="Pfannkoch C."/>
            <person name="Qi R."/>
            <person name="Regier M.A."/>
            <person name="Remington K."/>
            <person name="Shao H."/>
            <person name="Sharakhova M.V."/>
            <person name="Sitter C.D."/>
            <person name="Shetty J."/>
            <person name="Smith T.J."/>
            <person name="Strong R."/>
            <person name="Sun J."/>
            <person name="Thomasova D."/>
            <person name="Ton L.Q."/>
            <person name="Topalis P."/>
            <person name="Tu Z.J."/>
            <person name="Unger M.F."/>
            <person name="Walenz B."/>
            <person name="Wang A.H."/>
            <person name="Wang J."/>
            <person name="Wang M."/>
            <person name="Wang X."/>
            <person name="Woodford K.J."/>
            <person name="Wortman J.R."/>
            <person name="Wu M."/>
            <person name="Yao A."/>
            <person name="Zdobnov E.M."/>
            <person name="Zhang H."/>
            <person name="Zhao Q."/>
            <person name="Zhao S."/>
            <person name="Zhu S.C."/>
            <person name="Zhimulev I."/>
            <person name="Coluzzi M."/>
            <person name="della Torre A."/>
            <person name="Roth C.W."/>
            <person name="Louis C."/>
            <person name="Kalush F."/>
            <person name="Mural R.J."/>
            <person name="Myers E.W."/>
            <person name="Adams M.D."/>
            <person name="Smith H.O."/>
            <person name="Broder S."/>
            <person name="Gardner M.J."/>
            <person name="Fraser C.M."/>
            <person name="Birney E."/>
            <person name="Bork P."/>
            <person name="Brey P.T."/>
            <person name="Venter J.C."/>
            <person name="Weissenbach J."/>
            <person name="Kafatos F.C."/>
            <person name="Collins F.H."/>
            <person name="Hoffman S.L."/>
        </authorList>
    </citation>
    <scope>NUCLEOTIDE SEQUENCE [LARGE SCALE GENOMIC DNA]</scope>
    <source>
        <strain>PEST</strain>
    </source>
</reference>